<protein>
    <recommendedName>
        <fullName>Bombyxin B-5</fullName>
        <shortName>BBX-B5</shortName>
    </recommendedName>
    <alternativeName>
        <fullName>4K-prothoracicotropic hormone</fullName>
        <shortName>4K-PTTH</shortName>
    </alternativeName>
    <component>
        <recommendedName>
            <fullName>Bombyxin B-5 B chain</fullName>
        </recommendedName>
    </component>
    <component>
        <recommendedName>
            <fullName>Bombyxin B-5 A chain</fullName>
        </recommendedName>
    </component>
</protein>
<dbReference type="EMBL" id="D00780">
    <property type="protein sequence ID" value="BAA00676.1"/>
    <property type="molecule type" value="Genomic_DNA"/>
</dbReference>
<dbReference type="PIR" id="S69493">
    <property type="entry name" value="JQ0835"/>
</dbReference>
<dbReference type="RefSeq" id="NP_001166891.1">
    <property type="nucleotide sequence ID" value="NM_001173420.1"/>
</dbReference>
<dbReference type="SMR" id="P26739"/>
<dbReference type="EnsemblMetazoa" id="NM_001173420.1">
    <property type="protein sequence ID" value="NP_001166891.1"/>
    <property type="gene ID" value="GeneID_100169724"/>
</dbReference>
<dbReference type="EnsemblMetazoa" id="XM_038014052.1">
    <property type="protein sequence ID" value="XP_037869980.1"/>
    <property type="gene ID" value="LOC119629139"/>
</dbReference>
<dbReference type="GeneID" id="100169724"/>
<dbReference type="KEGG" id="bmor:100169724"/>
<dbReference type="CTD" id="100169724"/>
<dbReference type="InParanoid" id="P26739"/>
<dbReference type="OrthoDB" id="493443at7088"/>
<dbReference type="Proteomes" id="UP000005204">
    <property type="component" value="Unassembled WGS sequence"/>
</dbReference>
<dbReference type="GO" id="GO:0005615">
    <property type="term" value="C:extracellular space"/>
    <property type="evidence" value="ECO:0007669"/>
    <property type="project" value="InterPro"/>
</dbReference>
<dbReference type="GO" id="GO:0008083">
    <property type="term" value="F:growth factor activity"/>
    <property type="evidence" value="ECO:0007669"/>
    <property type="project" value="InterPro"/>
</dbReference>
<dbReference type="GO" id="GO:0005179">
    <property type="term" value="F:hormone activity"/>
    <property type="evidence" value="ECO:0007669"/>
    <property type="project" value="UniProtKB-KW"/>
</dbReference>
<dbReference type="GO" id="GO:0005159">
    <property type="term" value="F:insulin-like growth factor receptor binding"/>
    <property type="evidence" value="ECO:0007669"/>
    <property type="project" value="TreeGrafter"/>
</dbReference>
<dbReference type="GO" id="GO:0008283">
    <property type="term" value="P:cell population proliferation"/>
    <property type="evidence" value="ECO:0007669"/>
    <property type="project" value="TreeGrafter"/>
</dbReference>
<dbReference type="GO" id="GO:0048009">
    <property type="term" value="P:insulin-like growth factor receptor signaling pathway"/>
    <property type="evidence" value="ECO:0007669"/>
    <property type="project" value="TreeGrafter"/>
</dbReference>
<dbReference type="GO" id="GO:0043066">
    <property type="term" value="P:negative regulation of apoptotic process"/>
    <property type="evidence" value="ECO:0007669"/>
    <property type="project" value="TreeGrafter"/>
</dbReference>
<dbReference type="GO" id="GO:0008284">
    <property type="term" value="P:positive regulation of cell population proliferation"/>
    <property type="evidence" value="ECO:0007669"/>
    <property type="project" value="TreeGrafter"/>
</dbReference>
<dbReference type="GO" id="GO:0051897">
    <property type="term" value="P:positive regulation of phosphatidylinositol 3-kinase/protein kinase B signal transduction"/>
    <property type="evidence" value="ECO:0007669"/>
    <property type="project" value="TreeGrafter"/>
</dbReference>
<dbReference type="CDD" id="cd04366">
    <property type="entry name" value="IlGF_insulin_bombyxin_like"/>
    <property type="match status" value="1"/>
</dbReference>
<dbReference type="Gene3D" id="1.10.100.10">
    <property type="entry name" value="Insulin-like"/>
    <property type="match status" value="1"/>
</dbReference>
<dbReference type="InterPro" id="IPR017097">
    <property type="entry name" value="Bombyxin"/>
</dbReference>
<dbReference type="InterPro" id="IPR027285">
    <property type="entry name" value="Bombyxin_B"/>
</dbReference>
<dbReference type="InterPro" id="IPR016179">
    <property type="entry name" value="Insulin-like"/>
</dbReference>
<dbReference type="InterPro" id="IPR036438">
    <property type="entry name" value="Insulin-like_sf"/>
</dbReference>
<dbReference type="InterPro" id="IPR022353">
    <property type="entry name" value="Insulin_CS"/>
</dbReference>
<dbReference type="InterPro" id="IPR022352">
    <property type="entry name" value="Insulin_family"/>
</dbReference>
<dbReference type="PANTHER" id="PTHR46845">
    <property type="entry name" value="INSULIN-LIKE GROWTH FACTOR I"/>
    <property type="match status" value="1"/>
</dbReference>
<dbReference type="PANTHER" id="PTHR46845:SF1">
    <property type="entry name" value="INSULIN-LIKE GROWTH FACTOR I"/>
    <property type="match status" value="1"/>
</dbReference>
<dbReference type="Pfam" id="PF00049">
    <property type="entry name" value="Insulin"/>
    <property type="match status" value="2"/>
</dbReference>
<dbReference type="PIRSF" id="PIRSF037038">
    <property type="entry name" value="Bombyxin"/>
    <property type="match status" value="1"/>
</dbReference>
<dbReference type="PIRSF" id="PIRSF500313">
    <property type="entry name" value="Bombyxin_B"/>
    <property type="match status" value="1"/>
</dbReference>
<dbReference type="PRINTS" id="PR02003">
    <property type="entry name" value="BOMBYXIN"/>
</dbReference>
<dbReference type="PRINTS" id="PR00276">
    <property type="entry name" value="INSULINFAMLY"/>
</dbReference>
<dbReference type="SMART" id="SM00078">
    <property type="entry name" value="IlGF"/>
    <property type="match status" value="1"/>
</dbReference>
<dbReference type="SUPFAM" id="SSF56994">
    <property type="entry name" value="Insulin-like"/>
    <property type="match status" value="1"/>
</dbReference>
<dbReference type="PROSITE" id="PS00262">
    <property type="entry name" value="INSULIN"/>
    <property type="match status" value="1"/>
</dbReference>
<feature type="signal peptide" evidence="2">
    <location>
        <begin position="1"/>
        <end position="20"/>
    </location>
</feature>
<feature type="peptide" id="PRO_0000016001" description="Bombyxin B-5 B chain">
    <location>
        <begin position="21"/>
        <end position="46"/>
    </location>
</feature>
<feature type="propeptide" id="PRO_0000016002" description="C peptide like">
    <location>
        <begin position="49"/>
        <end position="64"/>
    </location>
</feature>
<feature type="peptide" id="PRO_0000016003" description="Bombyxin B-5 A chain">
    <location>
        <begin position="67"/>
        <end position="90"/>
    </location>
</feature>
<feature type="disulfide bond" description="Interchain (between B and A chains)" evidence="1">
    <location>
        <begin position="30"/>
        <end position="75"/>
    </location>
</feature>
<feature type="disulfide bond" description="Interchain (between B and A chains)" evidence="1">
    <location>
        <begin position="42"/>
        <end position="88"/>
    </location>
</feature>
<feature type="disulfide bond" evidence="1">
    <location>
        <begin position="74"/>
        <end position="79"/>
    </location>
</feature>
<accession>P26739</accession>
<sequence>MMKTAVMFILVVVISLTYSSEEQEVARTYCGRHLANILAYVCFGVEKRGGAQYAPYWQETYLRSRKGPGVVDECCFRPCKLEVLKSYCGV</sequence>
<gene>
    <name type="primary">BBXB5</name>
</gene>
<organism>
    <name type="scientific">Bombyx mori</name>
    <name type="common">Silk moth</name>
    <dbReference type="NCBI Taxonomy" id="7091"/>
    <lineage>
        <taxon>Eukaryota</taxon>
        <taxon>Metazoa</taxon>
        <taxon>Ecdysozoa</taxon>
        <taxon>Arthropoda</taxon>
        <taxon>Hexapoda</taxon>
        <taxon>Insecta</taxon>
        <taxon>Pterygota</taxon>
        <taxon>Neoptera</taxon>
        <taxon>Endopterygota</taxon>
        <taxon>Lepidoptera</taxon>
        <taxon>Glossata</taxon>
        <taxon>Ditrysia</taxon>
        <taxon>Bombycoidea</taxon>
        <taxon>Bombycidae</taxon>
        <taxon>Bombycinae</taxon>
        <taxon>Bombyx</taxon>
    </lineage>
</organism>
<comment type="function">
    <text>Brain peptide responsible for activation of prothoracic glands to produce ecdysone in insects.</text>
</comment>
<comment type="subunit">
    <text>Heterodimer of a B chain and an A chain linked by two disulfide bonds.</text>
</comment>
<comment type="subcellular location">
    <subcellularLocation>
        <location>Secreted</location>
    </subcellularLocation>
</comment>
<comment type="miscellaneous">
    <text>Silk worm has two kinds of PTTH: 4K-PTTH and 22K-PTTH; there are many forms of 4K-PTTH.</text>
</comment>
<comment type="similarity">
    <text evidence="3">Belongs to the insulin family.</text>
</comment>
<name>BXB5_BOMMO</name>
<evidence type="ECO:0000250" key="1"/>
<evidence type="ECO:0000255" key="2"/>
<evidence type="ECO:0000305" key="3"/>
<proteinExistence type="inferred from homology"/>
<reference key="1">
    <citation type="journal article" date="1996" name="J. Mol. Biol.">
        <title>Multiple gene copies for bombyxin, an insulin-related peptide of the silkmoth Bombyx mori: structural signs for gene rearrangement and duplication responsible for generation of multiple molecular forms of bombyxin.</title>
        <authorList>
            <person name="Kondo H."/>
            <person name="Ino M."/>
            <person name="Suzuki A."/>
            <person name="Ishizaki H."/>
            <person name="Iwami M."/>
        </authorList>
    </citation>
    <scope>NUCLEOTIDE SEQUENCE [GENOMIC DNA]</scope>
</reference>
<keyword id="KW-0165">Cleavage on pair of basic residues</keyword>
<keyword id="KW-1015">Disulfide bond</keyword>
<keyword id="KW-0372">Hormone</keyword>
<keyword id="KW-1185">Reference proteome</keyword>
<keyword id="KW-0964">Secreted</keyword>
<keyword id="KW-0732">Signal</keyword>